<gene>
    <name evidence="4 6" type="primary">agaSK</name>
    <name evidence="6" type="ORF">RUGNEv3_61222</name>
</gene>
<dbReference type="EC" id="3.2.1.22" evidence="3"/>
<dbReference type="EC" id="2.7.-.-" evidence="3"/>
<dbReference type="EMBL" id="FQ790379">
    <property type="protein sequence ID" value="CCA61959.1"/>
    <property type="molecule type" value="Genomic_DNA"/>
</dbReference>
<dbReference type="PDB" id="2YFN">
    <property type="method" value="X-ray"/>
    <property type="resolution" value="1.45 A"/>
    <property type="chains" value="A=1-720"/>
</dbReference>
<dbReference type="PDB" id="2YFO">
    <property type="method" value="X-ray"/>
    <property type="resolution" value="1.35 A"/>
    <property type="chains" value="A=1-720"/>
</dbReference>
<dbReference type="PDBsum" id="2YFN"/>
<dbReference type="PDBsum" id="2YFO"/>
<dbReference type="SMR" id="G4T4R7"/>
<dbReference type="BioCyc" id="MetaCyc:MONOMER-18513"/>
<dbReference type="EvolutionaryTrace" id="G4T4R7"/>
<dbReference type="GO" id="GO:0004557">
    <property type="term" value="F:alpha-galactosidase activity"/>
    <property type="evidence" value="ECO:0000314"/>
    <property type="project" value="UniProtKB"/>
</dbReference>
<dbReference type="GO" id="GO:0005524">
    <property type="term" value="F:ATP binding"/>
    <property type="evidence" value="ECO:0000314"/>
    <property type="project" value="UniProtKB"/>
</dbReference>
<dbReference type="GO" id="GO:0019200">
    <property type="term" value="F:carbohydrate kinase activity"/>
    <property type="evidence" value="ECO:0000314"/>
    <property type="project" value="UniProtKB"/>
</dbReference>
<dbReference type="GO" id="GO:0000287">
    <property type="term" value="F:magnesium ion binding"/>
    <property type="evidence" value="ECO:0000314"/>
    <property type="project" value="UniProtKB"/>
</dbReference>
<dbReference type="GO" id="GO:0016779">
    <property type="term" value="F:nucleotidyltransferase activity"/>
    <property type="evidence" value="ECO:0000314"/>
    <property type="project" value="UniProtKB"/>
</dbReference>
<dbReference type="GO" id="GO:0052692">
    <property type="term" value="F:raffinose alpha-galactosidase activity"/>
    <property type="evidence" value="ECO:0000314"/>
    <property type="project" value="UniProtKB"/>
</dbReference>
<dbReference type="GO" id="GO:0005995">
    <property type="term" value="P:melibiose catabolic process"/>
    <property type="evidence" value="ECO:0000314"/>
    <property type="project" value="UniProtKB"/>
</dbReference>
<dbReference type="GO" id="GO:0051289">
    <property type="term" value="P:protein homotetramerization"/>
    <property type="evidence" value="ECO:0000314"/>
    <property type="project" value="UniProtKB"/>
</dbReference>
<dbReference type="GO" id="GO:0034484">
    <property type="term" value="P:raffinose catabolic process"/>
    <property type="evidence" value="ECO:0000314"/>
    <property type="project" value="UniProtKB"/>
</dbReference>
<dbReference type="GO" id="GO:0033531">
    <property type="term" value="P:stachyose metabolic process"/>
    <property type="evidence" value="ECO:0000314"/>
    <property type="project" value="UniProtKB"/>
</dbReference>
<dbReference type="CDD" id="cd14791">
    <property type="entry name" value="GH36"/>
    <property type="match status" value="1"/>
</dbReference>
<dbReference type="FunFam" id="3.20.20.70:FF:000118">
    <property type="entry name" value="Alpha-galactosidase"/>
    <property type="match status" value="1"/>
</dbReference>
<dbReference type="Gene3D" id="3.20.20.70">
    <property type="entry name" value="Aldolase class I"/>
    <property type="match status" value="1"/>
</dbReference>
<dbReference type="Gene3D" id="2.70.98.60">
    <property type="entry name" value="alpha-galactosidase from lactobacil brevis"/>
    <property type="match status" value="1"/>
</dbReference>
<dbReference type="Gene3D" id="2.60.40.1180">
    <property type="entry name" value="Golgi alpha-mannosidase II"/>
    <property type="match status" value="1"/>
</dbReference>
<dbReference type="Gene3D" id="3.40.50.300">
    <property type="entry name" value="P-loop containing nucleotide triphosphate hydrolases"/>
    <property type="match status" value="1"/>
</dbReference>
<dbReference type="InterPro" id="IPR013785">
    <property type="entry name" value="Aldolase_TIM"/>
</dbReference>
<dbReference type="InterPro" id="IPR038417">
    <property type="entry name" value="Alpga-gal_N_sf"/>
</dbReference>
<dbReference type="InterPro" id="IPR050985">
    <property type="entry name" value="Alpha-glycosidase_related"/>
</dbReference>
<dbReference type="InterPro" id="IPR000111">
    <property type="entry name" value="Glyco_hydro_27/36_CS"/>
</dbReference>
<dbReference type="InterPro" id="IPR002252">
    <property type="entry name" value="Glyco_hydro_36"/>
</dbReference>
<dbReference type="InterPro" id="IPR031705">
    <property type="entry name" value="Glyco_hydro_36_C"/>
</dbReference>
<dbReference type="InterPro" id="IPR031704">
    <property type="entry name" value="Glyco_hydro_36_N"/>
</dbReference>
<dbReference type="InterPro" id="IPR013780">
    <property type="entry name" value="Glyco_hydro_b"/>
</dbReference>
<dbReference type="InterPro" id="IPR017853">
    <property type="entry name" value="Glycoside_hydrolase_SF"/>
</dbReference>
<dbReference type="InterPro" id="IPR027417">
    <property type="entry name" value="P-loop_NTPase"/>
</dbReference>
<dbReference type="InterPro" id="IPR006083">
    <property type="entry name" value="PRK/URK"/>
</dbReference>
<dbReference type="PANTHER" id="PTHR43053:SF3">
    <property type="entry name" value="ALPHA-GALACTOSIDASE C-RELATED"/>
    <property type="match status" value="1"/>
</dbReference>
<dbReference type="PANTHER" id="PTHR43053">
    <property type="entry name" value="GLYCOSIDASE FAMILY 31"/>
    <property type="match status" value="1"/>
</dbReference>
<dbReference type="Pfam" id="PF16874">
    <property type="entry name" value="Glyco_hydro_36C"/>
    <property type="match status" value="1"/>
</dbReference>
<dbReference type="Pfam" id="PF16875">
    <property type="entry name" value="Glyco_hydro_36N"/>
    <property type="match status" value="1"/>
</dbReference>
<dbReference type="Pfam" id="PF02065">
    <property type="entry name" value="Melibiase"/>
    <property type="match status" value="1"/>
</dbReference>
<dbReference type="Pfam" id="PF00485">
    <property type="entry name" value="PRK"/>
    <property type="match status" value="1"/>
</dbReference>
<dbReference type="PRINTS" id="PR00743">
    <property type="entry name" value="GLHYDRLASE36"/>
</dbReference>
<dbReference type="SUPFAM" id="SSF51445">
    <property type="entry name" value="(Trans)glycosidases"/>
    <property type="match status" value="1"/>
</dbReference>
<dbReference type="SUPFAM" id="SSF52540">
    <property type="entry name" value="P-loop containing nucleoside triphosphate hydrolases"/>
    <property type="match status" value="1"/>
</dbReference>
<dbReference type="PROSITE" id="PS00512">
    <property type="entry name" value="ALPHA_GALACTOSIDASE"/>
    <property type="match status" value="1"/>
</dbReference>
<comment type="function">
    <text evidence="3">Bifunctional enzyme with alpha-galactosidase and sucrose kinase activities. Produces sucrose-6-phosphate directly from raffinose. Binds ATP. Phosphorylates sucrose specifically on the C6 position of glucose in the presence of ATP. Hydrolyzes melibiose, raffinose, stachyose and synthetic substrate p-nitrophenyl-alpha-D-galactopyranoside with high activity. Low activity against locust bean gum, guar gum and synthetic substrates xylose alpha-D-4-nitrophenol, glucose alpha-D-4-nitrophenol and o-nitrophenyl-alpha-D-galactopyranoside.</text>
</comment>
<comment type="catalytic activity">
    <reaction evidence="3">
        <text>Hydrolysis of terminal, non-reducing alpha-D-galactose residues in alpha-D-galactosides, including galactose oligosaccharides, galactomannans and galactolipids.</text>
        <dbReference type="EC" id="3.2.1.22"/>
    </reaction>
</comment>
<comment type="cofactor">
    <cofactor evidence="3">
        <name>Mg(2+)</name>
        <dbReference type="ChEBI" id="CHEBI:18420"/>
    </cofactor>
</comment>
<comment type="biophysicochemical properties">
    <kinetics>
        <KM evidence="3">1.37 mM for p-nitrophenyl-alpha-D-galactopyranoside (at pH 6.0 and 37 degrees Celsius)</KM>
        <text evidence="3">kcat/KM is 1850 s(1) mM(1) for p-nitrophenyl-alpha-D-galactopyranoside.</text>
    </kinetics>
    <phDependence>
        <text evidence="3">Optimum pH is 6.0. Active between pH 4.0-6.5.</text>
    </phDependence>
    <temperatureDependence>
        <text evidence="3">Optimum temperature is 50 degrees Celsius.</text>
    </temperatureDependence>
</comment>
<comment type="subunit">
    <text evidence="3">Homotetramer.</text>
</comment>
<comment type="similarity">
    <text evidence="5">In the N-terminal section; belongs to the glycosyl hydrolase 36 family.</text>
</comment>
<comment type="similarity">
    <text evidence="5">In the C-terminal section; belongs to the uridine kinase family.</text>
</comment>
<name>AGASK_MEDGN</name>
<evidence type="ECO:0000250" key="1">
    <source>
        <dbReference type="UniProtKB" id="O43252"/>
    </source>
</evidence>
<evidence type="ECO:0000250" key="2">
    <source>
        <dbReference type="UniProtKB" id="Q8A6L0"/>
    </source>
</evidence>
<evidence type="ECO:0000269" key="3">
    <source>
    </source>
</evidence>
<evidence type="ECO:0000303" key="4">
    <source>
    </source>
</evidence>
<evidence type="ECO:0000305" key="5"/>
<evidence type="ECO:0000312" key="6">
    <source>
        <dbReference type="EMBL" id="CCA61959.1"/>
    </source>
</evidence>
<evidence type="ECO:0000312" key="7">
    <source>
        <dbReference type="PDB" id="2YFN"/>
    </source>
</evidence>
<evidence type="ECO:0000312" key="8">
    <source>
        <dbReference type="PDB" id="2YFO"/>
    </source>
</evidence>
<evidence type="ECO:0007744" key="9">
    <source>
        <dbReference type="PDB" id="2YFN"/>
    </source>
</evidence>
<evidence type="ECO:0007744" key="10">
    <source>
        <dbReference type="PDB" id="2YFO"/>
    </source>
</evidence>
<evidence type="ECO:0007829" key="11">
    <source>
        <dbReference type="PDB" id="2YFO"/>
    </source>
</evidence>
<keyword id="KW-0002">3D-structure</keyword>
<keyword id="KW-0067">ATP-binding</keyword>
<keyword id="KW-0326">Glycosidase</keyword>
<keyword id="KW-0378">Hydrolase</keyword>
<keyword id="KW-0418">Kinase</keyword>
<keyword id="KW-0460">Magnesium</keyword>
<keyword id="KW-0479">Metal-binding</keyword>
<keyword id="KW-0511">Multifunctional enzyme</keyword>
<keyword id="KW-0547">Nucleotide-binding</keyword>
<keyword id="KW-0548">Nucleotidyltransferase</keyword>
<keyword id="KW-0808">Transferase</keyword>
<reference evidence="9 10" key="1">
    <citation type="journal article" date="2011" name="J. Biol. Chem.">
        <title>alpha-Galactosidase/sucrose kinase (AgaSK), a novel bifunctional enzyme from the human microbiome coupling galactosidase and kinase activities.</title>
        <authorList>
            <person name="Bruel L."/>
            <person name="Sulzenbacher G."/>
            <person name="Cervera Tison M."/>
            <person name="Pujol A."/>
            <person name="Nicoletti C."/>
            <person name="Perrier J."/>
            <person name="Galinier A."/>
            <person name="Ropartz D."/>
            <person name="Fons M."/>
            <person name="Pompeo F."/>
            <person name="Giardina T."/>
        </authorList>
    </citation>
    <scope>NUCLEOTIDE SEQUENCE [GENOMIC DNA]</scope>
    <scope>X-RAY CRYSTALLOGRAPHY (1.35 ANGSTROMS) OF 1-720 OF SUBSTRATE-FREE ENZYME AND IN COMPLEX WITH GALACTOSE AND MAGNESIUM</scope>
    <scope>FUNCTION</scope>
    <scope>CATALYTIC ACTIVITY</scope>
    <scope>COFACTOR</scope>
    <scope>BIOPHYSICOCHEMICAL PROPERTIES</scope>
    <scope>SUBUNIT</scope>
    <source>
        <strain evidence="4">E1</strain>
    </source>
</reference>
<proteinExistence type="evidence at protein level"/>
<protein>
    <recommendedName>
        <fullName evidence="4 7 8">Bifunctional alpha-galactosidase/sucrose kinase AgaSK</fullName>
    </recommendedName>
    <domain>
        <recommendedName>
            <fullName evidence="4">Alpha-galactosidase</fullName>
            <ecNumber evidence="3">3.2.1.22</ecNumber>
        </recommendedName>
        <alternativeName>
            <fullName evidence="5">Melibiase</fullName>
        </alternativeName>
    </domain>
    <domain>
        <recommendedName>
            <fullName evidence="4">Sucrose kinase</fullName>
            <ecNumber evidence="3">2.7.-.-</ecNumber>
        </recommendedName>
    </domain>
</protein>
<organism evidence="6">
    <name type="scientific">Mediterraneibacter gnavus</name>
    <name type="common">Ruminococcus gnavus</name>
    <dbReference type="NCBI Taxonomy" id="33038"/>
    <lineage>
        <taxon>Bacteria</taxon>
        <taxon>Bacillati</taxon>
        <taxon>Bacillota</taxon>
        <taxon>Clostridia</taxon>
        <taxon>Lachnospirales</taxon>
        <taxon>Lachnospiraceae</taxon>
        <taxon>Mediterraneibacter</taxon>
    </lineage>
</organism>
<sequence>MAIIYNPNKKIFTLHTAHTTYQMQVDPLGYLLHLYYGEKTNSSMDYVLTYADRGFSGNPYAAGMDRTYSLDALPQEYPSLGTGDYRNIALNIKNEKGVESADLLFKSYEIRNGKYRLQGLPAVWADEKEAQTLEIVLADENAQVEVHLLYGVLEENDVITRSVRIKNTGTGQITIEKAAAACLDFVQGEFDVLRFYGKHAMERNLERTPLGHGTIAFGSRRGTSSHQYNPAVILAEKGTTETAGSCYGMLFVYSGNFSCEAEKDQFNQTRLLLGLNEELFSYPLASGETFTVPEVILSYSAEGLSALSQQYHNCIRNHVCRSKYVHMQRPVLINSWEAAYFDFTGDTIVDLAKEAASLGIDMVVMDDGWFGKRNDDNSSLGDWQVNETKLGGSLAELITRVHEQGMKFGIWIEPEMINEDSDLYRAHPDWAIRIQGKKPVRSRNQLLLDFSRKEVRDCVFDQICVVLDQGKIDYVKWDMNRSMADVYAGNLSYDYVLGVYDFMERLCSRYPDLLLEGCSGGGGRFDAGMLYYSPQIWCSDNTDAINRTRIQYGTSFFYPVSAMGAHVSAVPNHQTGRVTSFHTRGVTAMAGTFGYELNPALLSDEEKQQIREQIKTYKKYETLINEGTYWRLSDPFTDEIAAWMSVSEEQDHALVSVVRLMAEANQATVYVRLRGLKPDAVYLEEQSGRQYSGAALMHAGIPLPPFTEEYEAYQFAFTELKEAGRLYEKVQKWCDGNAENRVVISIYGGSGSGKTTLATALQQYFLNDGTECYLLSGDDYPHRIPKRNDEERMRVYKEAGEDGLRGYLGTKKEIDFDRINEVLAAFHEGKDSITLRHMGREDGEISLEETDFSGISVLLLEWTHGGSDDLHGVDLPVFLESSPGETRERRIRRNRDENAASPFICRVVELEQEKLEVQRKNAGLIVGKDGSVYEQ</sequence>
<accession>G4T4R7</accession>
<accession>G3XAP8</accession>
<feature type="chain" id="PRO_0000438979" description="Bifunctional alpha-galactosidase/sucrose kinase AgaSK">
    <location>
        <begin position="1"/>
        <end position="935"/>
    </location>
</feature>
<feature type="region of interest" description="Alpha-galactosidase" evidence="5">
    <location>
        <begin position="1"/>
        <end position="720"/>
    </location>
</feature>
<feature type="region of interest" description="Sucrose kinase" evidence="5">
    <location>
        <begin position="721"/>
        <end position="935"/>
    </location>
</feature>
<feature type="active site" description="Nucleophile" evidence="2">
    <location>
        <position position="526"/>
    </location>
</feature>
<feature type="active site" description="Proton donor/acceptor" evidence="2">
    <location>
        <position position="606"/>
    </location>
</feature>
<feature type="binding site" evidence="3 9">
    <location>
        <position position="176"/>
    </location>
    <ligand>
        <name>Mg(2+)</name>
        <dbReference type="ChEBI" id="CHEBI:18420"/>
    </ligand>
</feature>
<feature type="binding site" evidence="3 9">
    <location>
        <position position="277"/>
    </location>
    <ligand>
        <name>Mg(2+)</name>
        <dbReference type="ChEBI" id="CHEBI:18420"/>
    </ligand>
</feature>
<feature type="binding site" evidence="3 9">
    <location>
        <position position="280"/>
    </location>
    <ligand>
        <name>Mg(2+)</name>
        <dbReference type="ChEBI" id="CHEBI:18420"/>
    </ligand>
</feature>
<feature type="binding site" evidence="3 10">
    <location>
        <begin position="366"/>
        <end position="367"/>
    </location>
    <ligand>
        <name>substrate</name>
    </ligand>
</feature>
<feature type="binding site" evidence="3 10">
    <location>
        <position position="443"/>
    </location>
    <ligand>
        <name>substrate</name>
    </ligand>
</feature>
<feature type="binding site" evidence="3 10">
    <location>
        <begin position="476"/>
        <end position="480"/>
    </location>
    <ligand>
        <name>substrate</name>
    </ligand>
</feature>
<feature type="binding site" evidence="3 10">
    <location>
        <begin position="518"/>
        <end position="521"/>
    </location>
    <ligand>
        <name>substrate</name>
    </ligand>
</feature>
<feature type="binding site" evidence="3 10">
    <location>
        <position position="540"/>
    </location>
    <ligand>
        <name>substrate</name>
    </ligand>
</feature>
<feature type="binding site" evidence="1">
    <location>
        <begin position="748"/>
        <end position="752"/>
    </location>
    <ligand>
        <name>ATP</name>
        <dbReference type="ChEBI" id="CHEBI:30616"/>
    </ligand>
</feature>
<feature type="binding site" evidence="1">
    <location>
        <position position="824"/>
    </location>
    <ligand>
        <name>ATP</name>
        <dbReference type="ChEBI" id="CHEBI:30616"/>
    </ligand>
</feature>
<feature type="strand" evidence="11">
    <location>
        <begin position="3"/>
        <end position="6"/>
    </location>
</feature>
<feature type="turn" evidence="11">
    <location>
        <begin position="7"/>
        <end position="10"/>
    </location>
</feature>
<feature type="strand" evidence="11">
    <location>
        <begin position="11"/>
        <end position="15"/>
    </location>
</feature>
<feature type="strand" evidence="11">
    <location>
        <begin position="17"/>
        <end position="25"/>
    </location>
</feature>
<feature type="strand" evidence="11">
    <location>
        <begin position="31"/>
        <end position="38"/>
    </location>
</feature>
<feature type="helix" evidence="11">
    <location>
        <begin position="44"/>
        <end position="47"/>
    </location>
</feature>
<feature type="helix" evidence="11">
    <location>
        <begin position="60"/>
        <end position="62"/>
    </location>
</feature>
<feature type="turn" evidence="11">
    <location>
        <begin position="70"/>
        <end position="72"/>
    </location>
</feature>
<feature type="strand" evidence="11">
    <location>
        <begin position="75"/>
        <end position="77"/>
    </location>
</feature>
<feature type="strand" evidence="11">
    <location>
        <begin position="89"/>
        <end position="93"/>
    </location>
</feature>
<feature type="strand" evidence="11">
    <location>
        <begin position="104"/>
        <end position="113"/>
    </location>
</feature>
<feature type="turn" evidence="11">
    <location>
        <begin position="127"/>
        <end position="129"/>
    </location>
</feature>
<feature type="strand" evidence="11">
    <location>
        <begin position="130"/>
        <end position="139"/>
    </location>
</feature>
<feature type="turn" evidence="11">
    <location>
        <begin position="140"/>
        <end position="143"/>
    </location>
</feature>
<feature type="strand" evidence="11">
    <location>
        <begin position="144"/>
        <end position="153"/>
    </location>
</feature>
<feature type="turn" evidence="11">
    <location>
        <begin position="154"/>
        <end position="157"/>
    </location>
</feature>
<feature type="strand" evidence="11">
    <location>
        <begin position="158"/>
        <end position="167"/>
    </location>
</feature>
<feature type="strand" evidence="11">
    <location>
        <begin position="169"/>
        <end position="171"/>
    </location>
</feature>
<feature type="strand" evidence="11">
    <location>
        <begin position="173"/>
        <end position="187"/>
    </location>
</feature>
<feature type="strand" evidence="11">
    <location>
        <begin position="190"/>
        <end position="198"/>
    </location>
</feature>
<feature type="strand" evidence="11">
    <location>
        <begin position="201"/>
        <end position="209"/>
    </location>
</feature>
<feature type="strand" evidence="11">
    <location>
        <begin position="212"/>
        <end position="219"/>
    </location>
</feature>
<feature type="strand" evidence="11">
    <location>
        <begin position="221"/>
        <end position="224"/>
    </location>
</feature>
<feature type="strand" evidence="11">
    <location>
        <begin position="226"/>
        <end position="228"/>
    </location>
</feature>
<feature type="strand" evidence="11">
    <location>
        <begin position="230"/>
        <end position="236"/>
    </location>
</feature>
<feature type="strand" evidence="11">
    <location>
        <begin position="241"/>
        <end position="244"/>
    </location>
</feature>
<feature type="strand" evidence="11">
    <location>
        <begin position="246"/>
        <end position="251"/>
    </location>
</feature>
<feature type="strand" evidence="11">
    <location>
        <begin position="257"/>
        <end position="263"/>
    </location>
</feature>
<feature type="strand" evidence="11">
    <location>
        <begin position="269"/>
        <end position="275"/>
    </location>
</feature>
<feature type="strand" evidence="11">
    <location>
        <begin position="282"/>
        <end position="284"/>
    </location>
</feature>
<feature type="strand" evidence="11">
    <location>
        <begin position="289"/>
        <end position="302"/>
    </location>
</feature>
<feature type="helix" evidence="11">
    <location>
        <begin position="304"/>
        <end position="318"/>
    </location>
</feature>
<feature type="helix" evidence="11">
    <location>
        <begin position="323"/>
        <end position="326"/>
    </location>
</feature>
<feature type="strand" evidence="11">
    <location>
        <begin position="332"/>
        <end position="334"/>
    </location>
</feature>
<feature type="helix" evidence="11">
    <location>
        <begin position="335"/>
        <end position="339"/>
    </location>
</feature>
<feature type="helix" evidence="11">
    <location>
        <begin position="345"/>
        <end position="357"/>
    </location>
</feature>
<feature type="strand" evidence="11">
    <location>
        <begin position="362"/>
        <end position="365"/>
    </location>
</feature>
<feature type="strand" evidence="11">
    <location>
        <begin position="367"/>
        <end position="370"/>
    </location>
</feature>
<feature type="helix" evidence="11">
    <location>
        <begin position="387"/>
        <end position="390"/>
    </location>
</feature>
<feature type="helix" evidence="11">
    <location>
        <begin position="394"/>
        <end position="403"/>
    </location>
</feature>
<feature type="strand" evidence="11">
    <location>
        <begin position="407"/>
        <end position="412"/>
    </location>
</feature>
<feature type="strand" evidence="11">
    <location>
        <begin position="419"/>
        <end position="421"/>
    </location>
</feature>
<feature type="helix" evidence="11">
    <location>
        <begin position="422"/>
        <end position="426"/>
    </location>
</feature>
<feature type="helix" evidence="11">
    <location>
        <begin position="428"/>
        <end position="430"/>
    </location>
</feature>
<feature type="strand" evidence="11">
    <location>
        <begin position="445"/>
        <end position="448"/>
    </location>
</feature>
<feature type="helix" evidence="11">
    <location>
        <begin position="453"/>
        <end position="467"/>
    </location>
</feature>
<feature type="strand" evidence="11">
    <location>
        <begin position="474"/>
        <end position="477"/>
    </location>
</feature>
<feature type="helix" evidence="11">
    <location>
        <begin position="491"/>
        <end position="509"/>
    </location>
</feature>
<feature type="strand" evidence="11">
    <location>
        <begin position="514"/>
        <end position="517"/>
    </location>
</feature>
<feature type="helix" evidence="11">
    <location>
        <begin position="527"/>
        <end position="530"/>
    </location>
</feature>
<feature type="strand" evidence="11">
    <location>
        <begin position="534"/>
        <end position="537"/>
    </location>
</feature>
<feature type="helix" evidence="11">
    <location>
        <begin position="544"/>
        <end position="554"/>
    </location>
</feature>
<feature type="turn" evidence="11">
    <location>
        <begin position="555"/>
        <end position="557"/>
    </location>
</feature>
<feature type="helix" evidence="11">
    <location>
        <begin position="560"/>
        <end position="562"/>
    </location>
</feature>
<feature type="turn" evidence="11">
    <location>
        <begin position="573"/>
        <end position="575"/>
    </location>
</feature>
<feature type="helix" evidence="11">
    <location>
        <begin position="581"/>
        <end position="588"/>
    </location>
</feature>
<feature type="turn" evidence="11">
    <location>
        <begin position="589"/>
        <end position="592"/>
    </location>
</feature>
<feature type="strand" evidence="11">
    <location>
        <begin position="595"/>
        <end position="597"/>
    </location>
</feature>
<feature type="helix" evidence="11">
    <location>
        <begin position="599"/>
        <end position="601"/>
    </location>
</feature>
<feature type="helix" evidence="11">
    <location>
        <begin position="604"/>
        <end position="626"/>
    </location>
</feature>
<feature type="strand" evidence="11">
    <location>
        <begin position="627"/>
        <end position="631"/>
    </location>
</feature>
<feature type="turn" evidence="11">
    <location>
        <begin position="635"/>
        <end position="637"/>
    </location>
</feature>
<feature type="strand" evidence="11">
    <location>
        <begin position="638"/>
        <end position="646"/>
    </location>
</feature>
<feature type="strand" evidence="11">
    <location>
        <begin position="650"/>
        <end position="659"/>
    </location>
</feature>
<feature type="strand" evidence="11">
    <location>
        <begin position="680"/>
        <end position="684"/>
    </location>
</feature>
<feature type="turn" evidence="11">
    <location>
        <begin position="685"/>
        <end position="687"/>
    </location>
</feature>
<feature type="strand" evidence="11">
    <location>
        <begin position="690"/>
        <end position="692"/>
    </location>
</feature>
<feature type="helix" evidence="11">
    <location>
        <begin position="693"/>
        <end position="698"/>
    </location>
</feature>
<feature type="strand" evidence="11">
    <location>
        <begin position="712"/>
        <end position="719"/>
    </location>
</feature>